<evidence type="ECO:0000255" key="1">
    <source>
        <dbReference type="HAMAP-Rule" id="MF_01368"/>
    </source>
</evidence>
<evidence type="ECO:0000305" key="2"/>
<comment type="subunit">
    <text evidence="1">Part of the 50S ribosomal subunit. Contacts protein L32.</text>
</comment>
<comment type="similarity">
    <text evidence="1">Belongs to the bacterial ribosomal protein bL17 family.</text>
</comment>
<accession>Q8DS37</accession>
<dbReference type="EMBL" id="AE014133">
    <property type="protein sequence ID" value="AAN59603.1"/>
    <property type="molecule type" value="Genomic_DNA"/>
</dbReference>
<dbReference type="RefSeq" id="NP_722297.1">
    <property type="nucleotide sequence ID" value="NC_004350.2"/>
</dbReference>
<dbReference type="RefSeq" id="WP_002262314.1">
    <property type="nucleotide sequence ID" value="NC_004350.2"/>
</dbReference>
<dbReference type="SMR" id="Q8DS37"/>
<dbReference type="STRING" id="210007.SMU_2000"/>
<dbReference type="KEGG" id="smu:SMU_2000"/>
<dbReference type="PATRIC" id="fig|210007.7.peg.1780"/>
<dbReference type="eggNOG" id="COG0203">
    <property type="taxonomic scope" value="Bacteria"/>
</dbReference>
<dbReference type="HOGENOM" id="CLU_074407_2_2_9"/>
<dbReference type="OrthoDB" id="9809073at2"/>
<dbReference type="PhylomeDB" id="Q8DS37"/>
<dbReference type="Proteomes" id="UP000002512">
    <property type="component" value="Chromosome"/>
</dbReference>
<dbReference type="GO" id="GO:0022625">
    <property type="term" value="C:cytosolic large ribosomal subunit"/>
    <property type="evidence" value="ECO:0007669"/>
    <property type="project" value="TreeGrafter"/>
</dbReference>
<dbReference type="GO" id="GO:0003735">
    <property type="term" value="F:structural constituent of ribosome"/>
    <property type="evidence" value="ECO:0007669"/>
    <property type="project" value="InterPro"/>
</dbReference>
<dbReference type="GO" id="GO:0006412">
    <property type="term" value="P:translation"/>
    <property type="evidence" value="ECO:0007669"/>
    <property type="project" value="UniProtKB-UniRule"/>
</dbReference>
<dbReference type="FunFam" id="3.90.1030.10:FF:000002">
    <property type="entry name" value="50S ribosomal protein L17"/>
    <property type="match status" value="1"/>
</dbReference>
<dbReference type="Gene3D" id="3.90.1030.10">
    <property type="entry name" value="Ribosomal protein L17"/>
    <property type="match status" value="1"/>
</dbReference>
<dbReference type="HAMAP" id="MF_01368">
    <property type="entry name" value="Ribosomal_bL17"/>
    <property type="match status" value="1"/>
</dbReference>
<dbReference type="InterPro" id="IPR000456">
    <property type="entry name" value="Ribosomal_bL17"/>
</dbReference>
<dbReference type="InterPro" id="IPR047859">
    <property type="entry name" value="Ribosomal_bL17_CS"/>
</dbReference>
<dbReference type="InterPro" id="IPR036373">
    <property type="entry name" value="Ribosomal_bL17_sf"/>
</dbReference>
<dbReference type="NCBIfam" id="TIGR00059">
    <property type="entry name" value="L17"/>
    <property type="match status" value="1"/>
</dbReference>
<dbReference type="PANTHER" id="PTHR14413:SF16">
    <property type="entry name" value="LARGE RIBOSOMAL SUBUNIT PROTEIN BL17M"/>
    <property type="match status" value="1"/>
</dbReference>
<dbReference type="PANTHER" id="PTHR14413">
    <property type="entry name" value="RIBOSOMAL PROTEIN L17"/>
    <property type="match status" value="1"/>
</dbReference>
<dbReference type="Pfam" id="PF01196">
    <property type="entry name" value="Ribosomal_L17"/>
    <property type="match status" value="1"/>
</dbReference>
<dbReference type="SUPFAM" id="SSF64263">
    <property type="entry name" value="Prokaryotic ribosomal protein L17"/>
    <property type="match status" value="1"/>
</dbReference>
<dbReference type="PROSITE" id="PS01167">
    <property type="entry name" value="RIBOSOMAL_L17"/>
    <property type="match status" value="1"/>
</dbReference>
<proteinExistence type="inferred from homology"/>
<protein>
    <recommendedName>
        <fullName evidence="1">Large ribosomal subunit protein bL17</fullName>
    </recommendedName>
    <alternativeName>
        <fullName evidence="2">50S ribosomal protein L17</fullName>
    </alternativeName>
</protein>
<gene>
    <name evidence="1" type="primary">rplQ</name>
    <name type="ordered locus">SMU_2000</name>
</gene>
<name>RL17_STRMU</name>
<keyword id="KW-1185">Reference proteome</keyword>
<keyword id="KW-0687">Ribonucleoprotein</keyword>
<keyword id="KW-0689">Ribosomal protein</keyword>
<organism>
    <name type="scientific">Streptococcus mutans serotype c (strain ATCC 700610 / UA159)</name>
    <dbReference type="NCBI Taxonomy" id="210007"/>
    <lineage>
        <taxon>Bacteria</taxon>
        <taxon>Bacillati</taxon>
        <taxon>Bacillota</taxon>
        <taxon>Bacilli</taxon>
        <taxon>Lactobacillales</taxon>
        <taxon>Streptococcaceae</taxon>
        <taxon>Streptococcus</taxon>
    </lineage>
</organism>
<reference key="1">
    <citation type="journal article" date="2002" name="Proc. Natl. Acad. Sci. U.S.A.">
        <title>Genome sequence of Streptococcus mutans UA159, a cariogenic dental pathogen.</title>
        <authorList>
            <person name="Ajdic D.J."/>
            <person name="McShan W.M."/>
            <person name="McLaughlin R.E."/>
            <person name="Savic G."/>
            <person name="Chang J."/>
            <person name="Carson M.B."/>
            <person name="Primeaux C."/>
            <person name="Tian R."/>
            <person name="Kenton S."/>
            <person name="Jia H.G."/>
            <person name="Lin S.P."/>
            <person name="Qian Y."/>
            <person name="Li S."/>
            <person name="Zhu H."/>
            <person name="Najar F.Z."/>
            <person name="Lai H."/>
            <person name="White J."/>
            <person name="Roe B.A."/>
            <person name="Ferretti J.J."/>
        </authorList>
    </citation>
    <scope>NUCLEOTIDE SEQUENCE [LARGE SCALE GENOMIC DNA]</scope>
    <source>
        <strain>ATCC 700610 / UA159</strain>
    </source>
</reference>
<sequence length="128" mass="14540">MAYRKLGRTSSQRKAMFRDLTTDLLINESIVTTEARAKEIRKTVEKMITLGKRGNLHARRQAAAFVRNEIASESYDEAKDEYTSTTALQKLFSEIAPRYAERNGGYTRILKTEPRRGDAAPMAIIELV</sequence>
<feature type="chain" id="PRO_1000055956" description="Large ribosomal subunit protein bL17">
    <location>
        <begin position="1"/>
        <end position="128"/>
    </location>
</feature>